<reference key="1">
    <citation type="journal article" date="2000" name="Nucleic Acids Res.">
        <title>Complete genome sequence of the alkaliphilic bacterium Bacillus halodurans and genomic sequence comparison with Bacillus subtilis.</title>
        <authorList>
            <person name="Takami H."/>
            <person name="Nakasone K."/>
            <person name="Takaki Y."/>
            <person name="Maeno G."/>
            <person name="Sasaki R."/>
            <person name="Masui N."/>
            <person name="Fuji F."/>
            <person name="Hirama C."/>
            <person name="Nakamura Y."/>
            <person name="Ogasawara N."/>
            <person name="Kuhara S."/>
            <person name="Horikoshi K."/>
        </authorList>
    </citation>
    <scope>NUCLEOTIDE SEQUENCE [LARGE SCALE GENOMIC DNA]</scope>
    <source>
        <strain>ATCC BAA-125 / DSM 18197 / FERM 7344 / JCM 9153 / C-125</strain>
    </source>
</reference>
<evidence type="ECO:0000250" key="1">
    <source>
        <dbReference type="UniProtKB" id="P94529"/>
    </source>
</evidence>
<evidence type="ECO:0000255" key="2">
    <source>
        <dbReference type="PROSITE-ProRule" id="PRU00441"/>
    </source>
</evidence>
<evidence type="ECO:0000305" key="3"/>
<sequence length="316" mass="35653">MLKTGKGTEQEVVQVHTRKSSRLFTFFNSQKVVPYVLISPFILSFIVLSFYPTVQAIVMSFQRVLPSEVTFVGLWNYSRILNPTFFTALQNTTTYMILTVVILVSIPMLFAVLLNSKVVKFRILFRTALFLPALTSVIVAGMVFRLMFSESDTAVANQILNWIGLESVEWRYNAWSGMFLMVVLASWRWMGINILYFLAALQNVPKELYEAADIDGANVVQKFFYVTLPFLKPVTIFVTTISVIGGFRMFEESFVFWEAGSPGNIGLTIVGYLYQEGIQQNDMGFGAAIGVVLMLIIFVISITQLYLTGAFKKGDQ</sequence>
<protein>
    <recommendedName>
        <fullName evidence="1">Arabinooligosaccharides transport system permease protein AraP</fullName>
    </recommendedName>
</protein>
<name>ARAP_HALH5</name>
<organism>
    <name type="scientific">Halalkalibacterium halodurans (strain ATCC BAA-125 / DSM 18197 / FERM 7344 / JCM 9153 / C-125)</name>
    <name type="common">Bacillus halodurans</name>
    <dbReference type="NCBI Taxonomy" id="272558"/>
    <lineage>
        <taxon>Bacteria</taxon>
        <taxon>Bacillati</taxon>
        <taxon>Bacillota</taxon>
        <taxon>Bacilli</taxon>
        <taxon>Bacillales</taxon>
        <taxon>Bacillaceae</taxon>
        <taxon>Halalkalibacterium (ex Joshi et al. 2022)</taxon>
    </lineage>
</organism>
<accession>Q9KEF0</accession>
<proteinExistence type="inferred from homology"/>
<dbReference type="EMBL" id="BA000004">
    <property type="protein sequence ID" value="BAB04621.1"/>
    <property type="molecule type" value="Genomic_DNA"/>
</dbReference>
<dbReference type="PIR" id="F83762">
    <property type="entry name" value="F83762"/>
</dbReference>
<dbReference type="RefSeq" id="WP_010897075.1">
    <property type="nucleotide sequence ID" value="NC_002570.2"/>
</dbReference>
<dbReference type="SMR" id="Q9KEF0"/>
<dbReference type="STRING" id="272558.gene:10726776"/>
<dbReference type="KEGG" id="bha:BH0902"/>
<dbReference type="eggNOG" id="COG1175">
    <property type="taxonomic scope" value="Bacteria"/>
</dbReference>
<dbReference type="HOGENOM" id="CLU_016047_0_2_9"/>
<dbReference type="OrthoDB" id="9785347at2"/>
<dbReference type="Proteomes" id="UP000001258">
    <property type="component" value="Chromosome"/>
</dbReference>
<dbReference type="GO" id="GO:0005886">
    <property type="term" value="C:plasma membrane"/>
    <property type="evidence" value="ECO:0007669"/>
    <property type="project" value="UniProtKB-SubCell"/>
</dbReference>
<dbReference type="GO" id="GO:0055085">
    <property type="term" value="P:transmembrane transport"/>
    <property type="evidence" value="ECO:0007669"/>
    <property type="project" value="InterPro"/>
</dbReference>
<dbReference type="CDD" id="cd06261">
    <property type="entry name" value="TM_PBP2"/>
    <property type="match status" value="1"/>
</dbReference>
<dbReference type="Gene3D" id="1.10.3720.10">
    <property type="entry name" value="MetI-like"/>
    <property type="match status" value="1"/>
</dbReference>
<dbReference type="InterPro" id="IPR000515">
    <property type="entry name" value="MetI-like"/>
</dbReference>
<dbReference type="InterPro" id="IPR035906">
    <property type="entry name" value="MetI-like_sf"/>
</dbReference>
<dbReference type="InterPro" id="IPR050809">
    <property type="entry name" value="UgpAE/MalFG_permease"/>
</dbReference>
<dbReference type="PANTHER" id="PTHR43227:SF7">
    <property type="entry name" value="ARABINOOLIGOSACCHARIDES TRANSPORT SYSTEM PERMEASE PROTEIN ARAP"/>
    <property type="match status" value="1"/>
</dbReference>
<dbReference type="PANTHER" id="PTHR43227">
    <property type="entry name" value="BLL4140 PROTEIN"/>
    <property type="match status" value="1"/>
</dbReference>
<dbReference type="Pfam" id="PF00528">
    <property type="entry name" value="BPD_transp_1"/>
    <property type="match status" value="1"/>
</dbReference>
<dbReference type="SUPFAM" id="SSF161098">
    <property type="entry name" value="MetI-like"/>
    <property type="match status" value="1"/>
</dbReference>
<dbReference type="PROSITE" id="PS50928">
    <property type="entry name" value="ABC_TM1"/>
    <property type="match status" value="1"/>
</dbReference>
<gene>
    <name type="primary">araP</name>
    <name type="ordered locus">BH0902</name>
</gene>
<comment type="function">
    <text evidence="1">Part of the ABC transporter complex AraNPQ involved in the uptake of arabinooligosaccharides (By similarity). Responsible for the translocation of the substrate across the membrane (By similarity).</text>
</comment>
<comment type="subunit">
    <text evidence="1">The complex is composed of two ATP-binding proteins (MsmX), two transmembrane proteins (AraP and AraQ) and a solute-binding protein (AraN).</text>
</comment>
<comment type="subcellular location">
    <subcellularLocation>
        <location evidence="3">Cell membrane</location>
        <topology evidence="3">Multi-pass membrane protein</topology>
    </subcellularLocation>
</comment>
<comment type="similarity">
    <text evidence="3">Belongs to the binding-protein-dependent transport system permease family. MalFG subfamily.</text>
</comment>
<feature type="chain" id="PRO_0000059953" description="Arabinooligosaccharides transport system permease protein AraP">
    <location>
        <begin position="1"/>
        <end position="316"/>
    </location>
</feature>
<feature type="transmembrane region" description="Helical" evidence="2">
    <location>
        <begin position="32"/>
        <end position="52"/>
    </location>
</feature>
<feature type="transmembrane region" description="Helical" evidence="2">
    <location>
        <begin position="94"/>
        <end position="114"/>
    </location>
</feature>
<feature type="transmembrane region" description="Helical" evidence="2">
    <location>
        <begin position="128"/>
        <end position="148"/>
    </location>
</feature>
<feature type="transmembrane region" description="Helical" evidence="2">
    <location>
        <begin position="178"/>
        <end position="198"/>
    </location>
</feature>
<feature type="transmembrane region" description="Helical" evidence="2">
    <location>
        <begin position="224"/>
        <end position="244"/>
    </location>
</feature>
<feature type="transmembrane region" description="Helical" evidence="2">
    <location>
        <begin position="254"/>
        <end position="274"/>
    </location>
</feature>
<feature type="transmembrane region" description="Helical" evidence="2">
    <location>
        <begin position="283"/>
        <end position="303"/>
    </location>
</feature>
<feature type="domain" description="ABC transmembrane type-1" evidence="2">
    <location>
        <begin position="89"/>
        <end position="304"/>
    </location>
</feature>
<keyword id="KW-1003">Cell membrane</keyword>
<keyword id="KW-0472">Membrane</keyword>
<keyword id="KW-1185">Reference proteome</keyword>
<keyword id="KW-0762">Sugar transport</keyword>
<keyword id="KW-0812">Transmembrane</keyword>
<keyword id="KW-1133">Transmembrane helix</keyword>
<keyword id="KW-0813">Transport</keyword>